<feature type="chain" id="PRO_0000410166" description="Clampless protein 1">
    <location>
        <begin position="1"/>
        <end position="472"/>
    </location>
</feature>
<feature type="glycosylation site" description="N-linked (GlcNAc...) asparagine" evidence="1">
    <location>
        <position position="70"/>
    </location>
</feature>
<feature type="glycosylation site" description="N-linked (GlcNAc...) asparagine" evidence="1">
    <location>
        <position position="296"/>
    </location>
</feature>
<name>CLMP1_CRYNB</name>
<dbReference type="EMBL" id="AAEY01000010">
    <property type="protein sequence ID" value="EAL22576.1"/>
    <property type="molecule type" value="Genomic_DNA"/>
</dbReference>
<dbReference type="RefSeq" id="XP_777223.1">
    <property type="nucleotide sequence ID" value="XM_772130.1"/>
</dbReference>
<dbReference type="EnsemblFungi" id="AAW41485">
    <property type="protein sequence ID" value="AAW41485"/>
    <property type="gene ID" value="CNB01190"/>
</dbReference>
<dbReference type="GeneID" id="4934547"/>
<dbReference type="KEGG" id="cnb:CNBB4530"/>
<dbReference type="VEuPathDB" id="FungiDB:CNBB4530"/>
<dbReference type="HOGENOM" id="CLU_581412_0_0_1"/>
<dbReference type="OrthoDB" id="4311at5206"/>
<protein>
    <recommendedName>
        <fullName>Clampless protein 1</fullName>
        <shortName>CLP1</shortName>
    </recommendedName>
</protein>
<reference key="1">
    <citation type="journal article" date="2005" name="Science">
        <title>The genome of the basidiomycetous yeast and human pathogen Cryptococcus neoformans.</title>
        <authorList>
            <person name="Loftus B.J."/>
            <person name="Fung E."/>
            <person name="Roncaglia P."/>
            <person name="Rowley D."/>
            <person name="Amedeo P."/>
            <person name="Bruno D."/>
            <person name="Vamathevan J."/>
            <person name="Miranda M."/>
            <person name="Anderson I.J."/>
            <person name="Fraser J.A."/>
            <person name="Allen J.E."/>
            <person name="Bosdet I.E."/>
            <person name="Brent M.R."/>
            <person name="Chiu R."/>
            <person name="Doering T.L."/>
            <person name="Donlin M.J."/>
            <person name="D'Souza C.A."/>
            <person name="Fox D.S."/>
            <person name="Grinberg V."/>
            <person name="Fu J."/>
            <person name="Fukushima M."/>
            <person name="Haas B.J."/>
            <person name="Huang J.C."/>
            <person name="Janbon G."/>
            <person name="Jones S.J.M."/>
            <person name="Koo H.L."/>
            <person name="Krzywinski M.I."/>
            <person name="Kwon-Chung K.J."/>
            <person name="Lengeler K.B."/>
            <person name="Maiti R."/>
            <person name="Marra M.A."/>
            <person name="Marra R.E."/>
            <person name="Mathewson C.A."/>
            <person name="Mitchell T.G."/>
            <person name="Pertea M."/>
            <person name="Riggs F.R."/>
            <person name="Salzberg S.L."/>
            <person name="Schein J.E."/>
            <person name="Shvartsbeyn A."/>
            <person name="Shin H."/>
            <person name="Shumway M."/>
            <person name="Specht C.A."/>
            <person name="Suh B.B."/>
            <person name="Tenney A."/>
            <person name="Utterback T.R."/>
            <person name="Wickes B.L."/>
            <person name="Wortman J.R."/>
            <person name="Wye N.H."/>
            <person name="Kronstad J.W."/>
            <person name="Lodge J.K."/>
            <person name="Heitman J."/>
            <person name="Davis R.W."/>
            <person name="Fraser C.M."/>
            <person name="Hyman R.W."/>
        </authorList>
    </citation>
    <scope>NUCLEOTIDE SEQUENCE [LARGE SCALE GENOMIC DNA]</scope>
    <source>
        <strain>B-3501A</strain>
    </source>
</reference>
<accession>P0CP19</accession>
<accession>B0BNN5</accession>
<accession>Q55XA9</accession>
<accession>Q5KMM4</accession>
<proteinExistence type="predicted"/>
<evidence type="ECO:0000255" key="1"/>
<keyword id="KW-0325">Glycoprotein</keyword>
<comment type="function">
    <text>Required for developmental progression after cells of opposite mating types fuse with one another, essential for processes common to both dikaryotic filament formation and monokaryotic fruiting. A direct target for transcription factors Sxi1-alpha and Sxi2-a.</text>
</comment>
<gene>
    <name type="ordered locus">CNBB4530</name>
</gene>
<sequence>MATYLAPPVSSNKENSPAPNIALSDIDAISLSLRTSLSGVTLPAKKKVAALGLGRAPKFTYRRHSNKPYNRSTSITRAKKAAVQTKSVRSKAAVKKSNTRPLPLKLVQRLDVESARLERLRKAVWNPPAPVPGQVRVPLKLPYPRFPSIEYIDNEYLKEIPVQYIFDRMVPLLPSIATITLAYQPYASIPHPDSKILRDTTLAFAIPEVIDGRKPHWAAKARGREPDLALAVAYKSGEGSNGNTVVAVNSLAFATQCAYWPRLLTTSIPIPTPKRPTPSASAVSTSLPAIVETEENVSDASFSSSSSWSDSDSEVEFIDLPRLPRPVKDDKGFLHLPLVELPIPSPSTFPIIHRHLHHPSRALLPDLLGLPEHYTTRSQVLDAISGLSVQQLMDKLTTLQGVWQNLCSLGIGRLGTWRQLGEAWACVVGVIAGQGLLIAGQEEAEVQRTGRKTAAEDVAWEWVRREKAKEQQ</sequence>
<organism>
    <name type="scientific">Cryptococcus neoformans var. neoformans serotype D (strain B-3501A)</name>
    <name type="common">Filobasidiella neoformans</name>
    <dbReference type="NCBI Taxonomy" id="283643"/>
    <lineage>
        <taxon>Eukaryota</taxon>
        <taxon>Fungi</taxon>
        <taxon>Dikarya</taxon>
        <taxon>Basidiomycota</taxon>
        <taxon>Agaricomycotina</taxon>
        <taxon>Tremellomycetes</taxon>
        <taxon>Tremellales</taxon>
        <taxon>Cryptococcaceae</taxon>
        <taxon>Cryptococcus</taxon>
        <taxon>Cryptococcus neoformans species complex</taxon>
    </lineage>
</organism>